<dbReference type="EC" id="2.7.7.19"/>
<dbReference type="EMBL" id="BC000927">
    <property type="protein sequence ID" value="AAH00927.1"/>
    <property type="molecule type" value="mRNA"/>
</dbReference>
<dbReference type="EMBL" id="BC036014">
    <property type="protein sequence ID" value="AAH36014.1"/>
    <property type="molecule type" value="mRNA"/>
</dbReference>
<dbReference type="EMBL" id="BX248301">
    <property type="protein sequence ID" value="CAD62628.1"/>
    <property type="molecule type" value="mRNA"/>
</dbReference>
<dbReference type="EMBL" id="BX248753">
    <property type="protein sequence ID" value="CAD66560.1"/>
    <property type="molecule type" value="mRNA"/>
</dbReference>
<dbReference type="EMBL" id="BX161482">
    <property type="protein sequence ID" value="CAD61935.1"/>
    <property type="molecule type" value="mRNA"/>
</dbReference>
<dbReference type="EMBL" id="X76770">
    <property type="status" value="NOT_ANNOTATED_CDS"/>
    <property type="molecule type" value="mRNA"/>
</dbReference>
<dbReference type="CCDS" id="CCDS58334.1">
    <molecule id="P51003-2"/>
</dbReference>
<dbReference type="CCDS" id="CCDS9946.1">
    <molecule id="P51003-1"/>
</dbReference>
<dbReference type="RefSeq" id="NP_001238935.1">
    <molecule id="P51003-2"/>
    <property type="nucleotide sequence ID" value="NM_001252006.1"/>
</dbReference>
<dbReference type="RefSeq" id="NP_001238936.1">
    <property type="nucleotide sequence ID" value="NM_001252007.1"/>
</dbReference>
<dbReference type="RefSeq" id="NP_001280556.1">
    <property type="nucleotide sequence ID" value="NM_001293627.1"/>
</dbReference>
<dbReference type="RefSeq" id="NP_001280557.1">
    <property type="nucleotide sequence ID" value="NM_001293628.1"/>
</dbReference>
<dbReference type="RefSeq" id="NP_001280561.1">
    <property type="nucleotide sequence ID" value="NM_001293632.1"/>
</dbReference>
<dbReference type="RefSeq" id="NP_116021.2">
    <molecule id="P51003-1"/>
    <property type="nucleotide sequence ID" value="NM_032632.4"/>
</dbReference>
<dbReference type="PDB" id="8R8R">
    <property type="method" value="EM"/>
    <property type="resolution" value="2.79 A"/>
    <property type="chains" value="D=720-745"/>
</dbReference>
<dbReference type="PDBsum" id="8R8R"/>
<dbReference type="SMR" id="P51003"/>
<dbReference type="BioGRID" id="116119">
    <property type="interactions" value="103"/>
</dbReference>
<dbReference type="CORUM" id="P51003"/>
<dbReference type="DIP" id="DIP-27610N"/>
<dbReference type="DIP" id="DIP-40865N"/>
<dbReference type="FunCoup" id="P51003">
    <property type="interactions" value="5346"/>
</dbReference>
<dbReference type="IntAct" id="P51003">
    <property type="interactions" value="29"/>
</dbReference>
<dbReference type="MINT" id="P51003"/>
<dbReference type="STRING" id="9606.ENSP00000216277"/>
<dbReference type="DrugBank" id="DB02153">
    <property type="generic name" value="3-sulfino-L-alanine"/>
</dbReference>
<dbReference type="DrugBank" id="DB01860">
    <property type="generic name" value="Cordycepin Triphosphate"/>
</dbReference>
<dbReference type="DrugBank" id="DB03896">
    <property type="generic name" value="Triphosphoric acid"/>
</dbReference>
<dbReference type="GlyCosmos" id="P51003">
    <property type="glycosylation" value="1 site, 1 glycan"/>
</dbReference>
<dbReference type="GlyGen" id="P51003">
    <property type="glycosylation" value="11 sites, 1 N-linked glycan (1 site), 1 O-linked glycan (7 sites)"/>
</dbReference>
<dbReference type="iPTMnet" id="P51003"/>
<dbReference type="MetOSite" id="P51003"/>
<dbReference type="PhosphoSitePlus" id="P51003"/>
<dbReference type="BioMuta" id="PAPOLA"/>
<dbReference type="DMDM" id="59803092"/>
<dbReference type="jPOST" id="P51003"/>
<dbReference type="MassIVE" id="P51003"/>
<dbReference type="PaxDb" id="9606-ENSP00000216277"/>
<dbReference type="PeptideAtlas" id="P51003"/>
<dbReference type="ProteomicsDB" id="56276">
    <molecule id="P51003-1"/>
</dbReference>
<dbReference type="ProteomicsDB" id="56277">
    <molecule id="P51003-2"/>
</dbReference>
<dbReference type="Pumba" id="P51003"/>
<dbReference type="Antibodypedia" id="86">
    <property type="antibodies" value="140 antibodies from 21 providers"/>
</dbReference>
<dbReference type="DNASU" id="10914"/>
<dbReference type="Ensembl" id="ENST00000216277.13">
    <molecule id="P51003-1"/>
    <property type="protein sequence ID" value="ENSP00000216277.8"/>
    <property type="gene ID" value="ENSG00000090060.19"/>
</dbReference>
<dbReference type="Ensembl" id="ENST00000557320.5">
    <molecule id="P51003-2"/>
    <property type="protein sequence ID" value="ENSP00000450437.1"/>
    <property type="gene ID" value="ENSG00000090060.19"/>
</dbReference>
<dbReference type="GeneID" id="10914"/>
<dbReference type="KEGG" id="hsa:10914"/>
<dbReference type="MANE-Select" id="ENST00000216277.13">
    <property type="protein sequence ID" value="ENSP00000216277.8"/>
    <property type="RefSeq nucleotide sequence ID" value="NM_032632.5"/>
    <property type="RefSeq protein sequence ID" value="NP_116021.2"/>
</dbReference>
<dbReference type="UCSC" id="uc001yfo.5">
    <molecule id="P51003-1"/>
    <property type="organism name" value="human"/>
</dbReference>
<dbReference type="AGR" id="HGNC:14981"/>
<dbReference type="CTD" id="10914"/>
<dbReference type="DisGeNET" id="10914"/>
<dbReference type="GeneCards" id="PAPOLA"/>
<dbReference type="HGNC" id="HGNC:14981">
    <property type="gene designation" value="PAPOLA"/>
</dbReference>
<dbReference type="HPA" id="ENSG00000090060">
    <property type="expression patterns" value="Low tissue specificity"/>
</dbReference>
<dbReference type="MIM" id="605553">
    <property type="type" value="gene"/>
</dbReference>
<dbReference type="neXtProt" id="NX_P51003"/>
<dbReference type="OpenTargets" id="ENSG00000090060"/>
<dbReference type="PharmGKB" id="PA32932"/>
<dbReference type="VEuPathDB" id="HostDB:ENSG00000090060"/>
<dbReference type="eggNOG" id="KOG2245">
    <property type="taxonomic scope" value="Eukaryota"/>
</dbReference>
<dbReference type="GeneTree" id="ENSGT00940000154598"/>
<dbReference type="HOGENOM" id="CLU_011511_0_0_1"/>
<dbReference type="InParanoid" id="P51003"/>
<dbReference type="OMA" id="PAYPAMC"/>
<dbReference type="OrthoDB" id="412748at2759"/>
<dbReference type="PAN-GO" id="P51003">
    <property type="GO annotations" value="3 GO annotations based on evolutionary models"/>
</dbReference>
<dbReference type="PhylomeDB" id="P51003"/>
<dbReference type="TreeFam" id="TF300842"/>
<dbReference type="BRENDA" id="2.7.7.19">
    <property type="organism ID" value="2681"/>
</dbReference>
<dbReference type="PathwayCommons" id="P51003"/>
<dbReference type="Reactome" id="R-HSA-72187">
    <property type="pathway name" value="mRNA 3'-end processing"/>
</dbReference>
<dbReference type="Reactome" id="R-HSA-72203">
    <property type="pathway name" value="Processing of Capped Intron-Containing Pre-mRNA"/>
</dbReference>
<dbReference type="Reactome" id="R-HSA-73856">
    <property type="pathway name" value="RNA Polymerase II Transcription Termination"/>
</dbReference>
<dbReference type="Reactome" id="R-HSA-77595">
    <property type="pathway name" value="Processing of Intronless Pre-mRNAs"/>
</dbReference>
<dbReference type="SABIO-RK" id="P51003"/>
<dbReference type="SignaLink" id="P51003"/>
<dbReference type="SIGNOR" id="P51003"/>
<dbReference type="BioGRID-ORCS" id="10914">
    <property type="hits" value="149 hits in 1161 CRISPR screens"/>
</dbReference>
<dbReference type="ChiTaRS" id="PAPOLA">
    <property type="organism name" value="human"/>
</dbReference>
<dbReference type="GeneWiki" id="PAPOLA"/>
<dbReference type="GenomeRNAi" id="10914"/>
<dbReference type="Pharos" id="P51003">
    <property type="development level" value="Tbio"/>
</dbReference>
<dbReference type="PRO" id="PR:P51003"/>
<dbReference type="Proteomes" id="UP000005640">
    <property type="component" value="Chromosome 14"/>
</dbReference>
<dbReference type="RNAct" id="P51003">
    <property type="molecule type" value="protein"/>
</dbReference>
<dbReference type="Bgee" id="ENSG00000090060">
    <property type="expression patterns" value="Expressed in colonic epithelium and 212 other cell types or tissues"/>
</dbReference>
<dbReference type="ExpressionAtlas" id="P51003">
    <property type="expression patterns" value="baseline and differential"/>
</dbReference>
<dbReference type="GO" id="GO:0005737">
    <property type="term" value="C:cytoplasm"/>
    <property type="evidence" value="ECO:0000304"/>
    <property type="project" value="UniProtKB"/>
</dbReference>
<dbReference type="GO" id="GO:0005654">
    <property type="term" value="C:nucleoplasm"/>
    <property type="evidence" value="ECO:0000314"/>
    <property type="project" value="HPA"/>
</dbReference>
<dbReference type="GO" id="GO:0005634">
    <property type="term" value="C:nucleus"/>
    <property type="evidence" value="ECO:0000318"/>
    <property type="project" value="GO_Central"/>
</dbReference>
<dbReference type="GO" id="GO:0005524">
    <property type="term" value="F:ATP binding"/>
    <property type="evidence" value="ECO:0000250"/>
    <property type="project" value="UniProtKB"/>
</dbReference>
<dbReference type="GO" id="GO:0000287">
    <property type="term" value="F:magnesium ion binding"/>
    <property type="evidence" value="ECO:0000250"/>
    <property type="project" value="UniProtKB"/>
</dbReference>
<dbReference type="GO" id="GO:0030145">
    <property type="term" value="F:manganese ion binding"/>
    <property type="evidence" value="ECO:0000250"/>
    <property type="project" value="UniProtKB"/>
</dbReference>
<dbReference type="GO" id="GO:1990817">
    <property type="term" value="F:poly(A) RNA polymerase activity"/>
    <property type="evidence" value="ECO:0000314"/>
    <property type="project" value="UniProtKB"/>
</dbReference>
<dbReference type="GO" id="GO:0003723">
    <property type="term" value="F:RNA binding"/>
    <property type="evidence" value="ECO:0007669"/>
    <property type="project" value="UniProtKB-KW"/>
</dbReference>
<dbReference type="GO" id="GO:0180010">
    <property type="term" value="P:co-transcriptional mRNA 3'-end processing, cleavage and polyadenylation pathway"/>
    <property type="evidence" value="ECO:0000314"/>
    <property type="project" value="UniProtKB"/>
</dbReference>
<dbReference type="GO" id="GO:0180011">
    <property type="term" value="P:cytosolic mRNA polyadenylation"/>
    <property type="evidence" value="ECO:0007669"/>
    <property type="project" value="Ensembl"/>
</dbReference>
<dbReference type="GO" id="GO:0031124">
    <property type="term" value="P:mRNA 3'-end processing"/>
    <property type="evidence" value="ECO:0000314"/>
    <property type="project" value="UniProtKB"/>
</dbReference>
<dbReference type="CDD" id="cd05402">
    <property type="entry name" value="NT_PAP_TUTase"/>
    <property type="match status" value="1"/>
</dbReference>
<dbReference type="FunFam" id="3.30.460.10:FF:000002">
    <property type="entry name" value="Poly(A) polymerase alpha, putative"/>
    <property type="match status" value="1"/>
</dbReference>
<dbReference type="FunFam" id="1.10.1410.10:FF:000001">
    <property type="entry name" value="Putative poly(A) polymerase gamma"/>
    <property type="match status" value="1"/>
</dbReference>
<dbReference type="FunFam" id="3.30.70.590:FF:000001">
    <property type="entry name" value="Putative poly(A) polymerase gamma"/>
    <property type="match status" value="1"/>
</dbReference>
<dbReference type="Gene3D" id="1.10.1410.10">
    <property type="match status" value="1"/>
</dbReference>
<dbReference type="Gene3D" id="3.30.460.10">
    <property type="entry name" value="Beta Polymerase, domain 2"/>
    <property type="match status" value="1"/>
</dbReference>
<dbReference type="Gene3D" id="3.30.70.590">
    <property type="entry name" value="Poly(A) polymerase predicted RNA binding domain"/>
    <property type="match status" value="1"/>
</dbReference>
<dbReference type="InterPro" id="IPR043519">
    <property type="entry name" value="NT_sf"/>
</dbReference>
<dbReference type="InterPro" id="IPR011068">
    <property type="entry name" value="NuclTrfase_I-like_C"/>
</dbReference>
<dbReference type="InterPro" id="IPR007012">
    <property type="entry name" value="PolA_pol_cen_dom"/>
</dbReference>
<dbReference type="InterPro" id="IPR048840">
    <property type="entry name" value="PolA_pol_NTPase"/>
</dbReference>
<dbReference type="InterPro" id="IPR007010">
    <property type="entry name" value="PolA_pol_RNA-bd_dom"/>
</dbReference>
<dbReference type="InterPro" id="IPR014492">
    <property type="entry name" value="PolyA_polymerase"/>
</dbReference>
<dbReference type="PANTHER" id="PTHR10682">
    <property type="entry name" value="POLY A POLYMERASE"/>
    <property type="match status" value="1"/>
</dbReference>
<dbReference type="PANTHER" id="PTHR10682:SF9">
    <property type="entry name" value="POLY(A) POLYMERASE ALPHA"/>
    <property type="match status" value="1"/>
</dbReference>
<dbReference type="Pfam" id="PF04928">
    <property type="entry name" value="PAP_central"/>
    <property type="match status" value="1"/>
</dbReference>
<dbReference type="Pfam" id="PF20750">
    <property type="entry name" value="PAP_NTPase"/>
    <property type="match status" value="1"/>
</dbReference>
<dbReference type="Pfam" id="PF04926">
    <property type="entry name" value="PAP_RNA-bind"/>
    <property type="match status" value="2"/>
</dbReference>
<dbReference type="PIRSF" id="PIRSF018425">
    <property type="entry name" value="PolyA_polymerase"/>
    <property type="match status" value="1"/>
</dbReference>
<dbReference type="SUPFAM" id="SSF81301">
    <property type="entry name" value="Nucleotidyltransferase"/>
    <property type="match status" value="1"/>
</dbReference>
<dbReference type="SUPFAM" id="SSF55003">
    <property type="entry name" value="PAP/Archaeal CCA-adding enzyme, C-terminal domain"/>
    <property type="match status" value="1"/>
</dbReference>
<dbReference type="SUPFAM" id="SSF81631">
    <property type="entry name" value="PAP/OAS1 substrate-binding domain"/>
    <property type="match status" value="1"/>
</dbReference>
<comment type="function">
    <text evidence="5">Polymerase that creates the 3'-poly(A) tail of mRNA's. Also required for the endoribonucleolytic cleavage reaction at some polyadenylation sites. May acquire specificity through interaction with a cleavage and polyadenylation specificity factor (CPSF) at its C-terminus.</text>
</comment>
<comment type="catalytic activity">
    <reaction>
        <text>RNA(n) + ATP = RNA(n)-3'-adenine ribonucleotide + diphosphate</text>
        <dbReference type="Rhea" id="RHEA:11332"/>
        <dbReference type="Rhea" id="RHEA-COMP:14527"/>
        <dbReference type="Rhea" id="RHEA-COMP:17347"/>
        <dbReference type="ChEBI" id="CHEBI:30616"/>
        <dbReference type="ChEBI" id="CHEBI:33019"/>
        <dbReference type="ChEBI" id="CHEBI:140395"/>
        <dbReference type="ChEBI" id="CHEBI:173115"/>
        <dbReference type="EC" id="2.7.7.19"/>
    </reaction>
</comment>
<comment type="cofactor">
    <cofactor evidence="1">
        <name>Mg(2+)</name>
        <dbReference type="ChEBI" id="CHEBI:18420"/>
    </cofactor>
    <cofactor evidence="1">
        <name>Mn(2+)</name>
        <dbReference type="ChEBI" id="CHEBI:29035"/>
    </cofactor>
    <text evidence="1">Binds 2 magnesium ions. Also active with manganese.</text>
</comment>
<comment type="subunit">
    <text evidence="2 3 5">Monomer. Found in a complex with CPSF1, FIP1L1 and PAPOLA. Interacts with AHCYL1 and FIP1L1; the interaction with AHCYL1 seems to increase interaction with FIP1L1 (PubMed:19224921). Interacts with NUDT21; the interaction is diminished by acetylation. Interacts with KPNB1; the interaction promotes PAP nuclear import and is inhibited by acetylation of PAP (By similarity).</text>
</comment>
<comment type="subcellular location">
    <subcellularLocation>
        <location>Cytoplasm</location>
    </subcellularLocation>
    <subcellularLocation>
        <location>Nucleus</location>
    </subcellularLocation>
    <text>The 90 kDa form is nuclear while the 100 kDa and the 106 kDa forms are both nuclear and cytoplasmic.</text>
</comment>
<comment type="alternative products">
    <event type="alternative splicing"/>
    <isoform>
        <id>P51003-1</id>
        <name>1</name>
        <sequence type="displayed"/>
    </isoform>
    <isoform>
        <id>P51003-2</id>
        <name>2</name>
        <sequence type="described" ref="VSP_012895 VSP_012896"/>
    </isoform>
</comment>
<comment type="PTM">
    <text evidence="1">Polysumoylated. Varying sumoylation depending on tissue- and cell-type. Highly sumoylated in bladder and NIH 3T3 cells. Sumoylation is required for nuclear localization and enhances PAP stability. Desumoylated by SENP1. Inhibits polymerase activity (By similarity).</text>
</comment>
<comment type="PTM">
    <text evidence="1">Hyperphosphorylation on multiple CDK2 consensus and non-consensus sites in the C-terminal Ser/Thr-rich region represses PAP activity in late M-phase. Phosphorylation/dephosphorylation may regulate the interaction between PAP and CPSF (By similarity).</text>
</comment>
<comment type="PTM">
    <text evidence="1">Acetylated in the C-terminus. Acetylation decreases interaction with NUDT21 and KPNB1, and inhibits nuclear localization through inhibiting binding to the importin alpha/beta complex (By similarity).</text>
</comment>
<comment type="similarity">
    <text evidence="8">Belongs to the poly(A) polymerase family.</text>
</comment>
<feature type="initiator methionine" description="Removed" evidence="11">
    <location>
        <position position="1"/>
    </location>
</feature>
<feature type="chain" id="PRO_0000051612" description="Poly(A) polymerase alpha">
    <location>
        <begin position="2"/>
        <end position="745"/>
    </location>
</feature>
<feature type="region of interest" description="Disordered" evidence="4">
    <location>
        <begin position="1"/>
        <end position="22"/>
    </location>
</feature>
<feature type="region of interest" description="Ser/Thr-rich">
    <location>
        <begin position="508"/>
        <end position="643"/>
    </location>
</feature>
<feature type="region of interest" description="Disordered" evidence="4">
    <location>
        <begin position="523"/>
        <end position="565"/>
    </location>
</feature>
<feature type="region of interest" description="Disordered" evidence="4">
    <location>
        <begin position="577"/>
        <end position="704"/>
    </location>
</feature>
<feature type="region of interest" description="Required for interaction with NUDT21">
    <location>
        <begin position="677"/>
        <end position="745"/>
    </location>
</feature>
<feature type="short sequence motif" description="Nuclear localization signal 1" evidence="1">
    <location>
        <begin position="490"/>
        <end position="507"/>
    </location>
</feature>
<feature type="short sequence motif" description="Nuclear localization signal 2" evidence="1">
    <location>
        <begin position="650"/>
        <end position="665"/>
    </location>
</feature>
<feature type="compositionally biased region" description="Low complexity" evidence="4">
    <location>
        <begin position="1"/>
        <end position="17"/>
    </location>
</feature>
<feature type="compositionally biased region" description="Low complexity" evidence="4">
    <location>
        <begin position="523"/>
        <end position="534"/>
    </location>
</feature>
<feature type="compositionally biased region" description="Polar residues" evidence="4">
    <location>
        <begin position="535"/>
        <end position="557"/>
    </location>
</feature>
<feature type="compositionally biased region" description="Low complexity" evidence="4">
    <location>
        <begin position="583"/>
        <end position="594"/>
    </location>
</feature>
<feature type="compositionally biased region" description="Low complexity" evidence="4">
    <location>
        <begin position="611"/>
        <end position="640"/>
    </location>
</feature>
<feature type="compositionally biased region" description="Basic and acidic residues" evidence="4">
    <location>
        <begin position="655"/>
        <end position="666"/>
    </location>
</feature>
<feature type="compositionally biased region" description="Basic and acidic residues" evidence="4">
    <location>
        <begin position="682"/>
        <end position="692"/>
    </location>
</feature>
<feature type="compositionally biased region" description="Low complexity" evidence="4">
    <location>
        <begin position="694"/>
        <end position="704"/>
    </location>
</feature>
<feature type="binding site" evidence="1">
    <location>
        <begin position="100"/>
        <end position="102"/>
    </location>
    <ligand>
        <name>ATP</name>
        <dbReference type="ChEBI" id="CHEBI:30616"/>
    </ligand>
</feature>
<feature type="binding site" evidence="1">
    <location>
        <position position="109"/>
    </location>
    <ligand>
        <name>ATP</name>
        <dbReference type="ChEBI" id="CHEBI:30616"/>
    </ligand>
</feature>
<feature type="binding site" evidence="1">
    <location>
        <begin position="113"/>
        <end position="115"/>
    </location>
    <ligand>
        <name>ATP</name>
        <dbReference type="ChEBI" id="CHEBI:30616"/>
    </ligand>
</feature>
<feature type="binding site" evidence="1">
    <location>
        <position position="113"/>
    </location>
    <ligand>
        <name>Mg(2+)</name>
        <dbReference type="ChEBI" id="CHEBI:18420"/>
        <label>1</label>
        <note>catalytic</note>
    </ligand>
</feature>
<feature type="binding site" evidence="1">
    <location>
        <position position="113"/>
    </location>
    <ligand>
        <name>Mg(2+)</name>
        <dbReference type="ChEBI" id="CHEBI:18420"/>
        <label>2</label>
        <note>catalytic</note>
    </ligand>
</feature>
<feature type="binding site" evidence="1">
    <location>
        <position position="115"/>
    </location>
    <ligand>
        <name>Mg(2+)</name>
        <dbReference type="ChEBI" id="CHEBI:18420"/>
        <label>1</label>
        <note>catalytic</note>
    </ligand>
</feature>
<feature type="binding site" evidence="1">
    <location>
        <position position="115"/>
    </location>
    <ligand>
        <name>Mg(2+)</name>
        <dbReference type="ChEBI" id="CHEBI:18420"/>
        <label>2</label>
        <note>catalytic</note>
    </ligand>
</feature>
<feature type="binding site" evidence="1">
    <location>
        <position position="167"/>
    </location>
    <ligand>
        <name>ATP</name>
        <dbReference type="ChEBI" id="CHEBI:30616"/>
    </ligand>
</feature>
<feature type="binding site" evidence="1">
    <location>
        <position position="167"/>
    </location>
    <ligand>
        <name>Mg(2+)</name>
        <dbReference type="ChEBI" id="CHEBI:18420"/>
        <label>2</label>
        <note>catalytic</note>
    </ligand>
</feature>
<feature type="binding site" evidence="1">
    <location>
        <position position="228"/>
    </location>
    <ligand>
        <name>ATP</name>
        <dbReference type="ChEBI" id="CHEBI:30616"/>
    </ligand>
</feature>
<feature type="binding site" evidence="1">
    <location>
        <position position="237"/>
    </location>
    <ligand>
        <name>ATP</name>
        <dbReference type="ChEBI" id="CHEBI:30616"/>
    </ligand>
</feature>
<feature type="binding site" evidence="1">
    <location>
        <begin position="246"/>
        <end position="247"/>
    </location>
    <ligand>
        <name>ATP</name>
        <dbReference type="ChEBI" id="CHEBI:30616"/>
    </ligand>
</feature>
<feature type="site" description="Interaction with RNA" evidence="1">
    <location>
        <position position="153"/>
    </location>
</feature>
<feature type="site" description="Interaction with RNA" evidence="1">
    <location>
        <position position="158"/>
    </location>
</feature>
<feature type="site" description="Interaction with RNA" evidence="1">
    <location>
        <position position="328"/>
    </location>
</feature>
<feature type="site" description="Interaction with RNA" evidence="1">
    <location>
        <position position="399"/>
    </location>
</feature>
<feature type="site" description="Interaction with RNA" evidence="1">
    <location>
        <position position="524"/>
    </location>
</feature>
<feature type="modified residue" description="Phosphoserine" evidence="12">
    <location>
        <position position="10"/>
    </location>
</feature>
<feature type="modified residue" description="Phosphoserine" evidence="9 10 12">
    <location>
        <position position="24"/>
    </location>
</feature>
<feature type="modified residue" description="Phosphoserine" evidence="3">
    <location>
        <position position="537"/>
    </location>
</feature>
<feature type="modified residue" description="Phosphoserine" evidence="13">
    <location>
        <position position="558"/>
    </location>
</feature>
<feature type="modified residue" description="N6-acetyllysine" evidence="2">
    <location>
        <position position="641"/>
    </location>
</feature>
<feature type="modified residue" description="N6-acetyllysine" evidence="2">
    <location>
        <position position="650"/>
    </location>
</feature>
<feature type="modified residue" description="N6-acetyllysine; alternate" evidence="2">
    <location>
        <position position="736"/>
    </location>
</feature>
<feature type="modified residue" description="Phosphoserine" evidence="12">
    <location>
        <position position="738"/>
    </location>
</feature>
<feature type="modified residue" description="N6-acetyllysine; alternate" evidence="2">
    <location>
        <position position="740"/>
    </location>
</feature>
<feature type="cross-link" description="Glycyl lysine isopeptide (Lys-Gly) (interchain with G-Cter in SUMO)" evidence="8">
    <location>
        <position position="444"/>
    </location>
</feature>
<feature type="cross-link" description="Glycyl lysine isopeptide (Lys-Gly) (interchain with G-Cter in SUMO)" evidence="8">
    <location>
        <position position="445"/>
    </location>
</feature>
<feature type="cross-link" description="Glycyl lysine isopeptide (Lys-Gly) (interchain with G-Cter in SUMO)" evidence="8">
    <location>
        <position position="506"/>
    </location>
</feature>
<feature type="cross-link" description="Glycyl lysine isopeptide (Lys-Gly) (interchain with G-Cter in SUMO)" evidence="8">
    <location>
        <position position="507"/>
    </location>
</feature>
<feature type="cross-link" description="Glycyl lysine isopeptide (Lys-Gly) (interchain with G-Cter in SUMO); alternate" evidence="1">
    <location>
        <position position="736"/>
    </location>
</feature>
<feature type="cross-link" description="Glycyl lysine isopeptide (Lys-Gly) (interchain with G-Cter in SUMO); alternate" evidence="1">
    <location>
        <position position="740"/>
    </location>
</feature>
<feature type="splice variant" id="VSP_012895" description="In isoform 2." evidence="6 7">
    <original>EWPNPV</original>
    <variation>YVFRLY</variation>
    <location>
        <begin position="280"/>
        <end position="285"/>
    </location>
</feature>
<feature type="splice variant" id="VSP_012896" description="In isoform 2." evidence="6 7">
    <location>
        <begin position="286"/>
        <end position="745"/>
    </location>
</feature>
<feature type="sequence conflict" description="In Ref. 2; CAD62628." evidence="8" ref="2">
    <original>PF</original>
    <variation>GTSNSPGHSSFSAPSTKKIKTTRKQNIAWC</variation>
    <location>
        <begin position="2"/>
        <end position="3"/>
    </location>
</feature>
<feature type="sequence conflict" description="In Ref. 2; CAD61935." evidence="8" ref="2">
    <original>CRVTDEILHLVPNIDNFRLTLRAIKLWAKRHNIYS</original>
    <variation>MRKPTSFCVLQFLSDISCFYTSFVLKLFIAILLTQ</variation>
    <location>
        <begin position="204"/>
        <end position="238"/>
    </location>
</feature>
<reference key="1">
    <citation type="journal article" date="2004" name="Genome Res.">
        <title>The status, quality, and expansion of the NIH full-length cDNA project: the Mammalian Gene Collection (MGC).</title>
        <authorList>
            <consortium name="The MGC Project Team"/>
        </authorList>
    </citation>
    <scope>NUCLEOTIDE SEQUENCE [LARGE SCALE MRNA] (ISOFORMS 1 AND 2)</scope>
    <source>
        <tissue>Placenta</tissue>
        <tissue>Testis</tissue>
    </source>
</reference>
<reference key="2">
    <citation type="submission" date="2003-02" db="EMBL/GenBank/DDBJ databases">
        <title>Full-length cDNA libraries and normalization.</title>
        <authorList>
            <person name="Li W.B."/>
            <person name="Gruber C."/>
            <person name="Jessee J."/>
            <person name="Polayes D."/>
        </authorList>
    </citation>
    <scope>NUCLEOTIDE SEQUENCE [LARGE SCALE MRNA] OF 1-725 (ISOFORMS 1 AND 2)</scope>
    <source>
        <tissue>B-cell</tissue>
        <tissue>Fetal brain</tissue>
    </source>
</reference>
<reference key="3">
    <citation type="journal article" date="1994" name="Proc. Natl. Acad. Sci. U.S.A.">
        <title>Multiple forms of poly(A) polymerases in human cells.</title>
        <authorList>
            <person name="Thuresson A.-C."/>
            <person name="Aastroem J."/>
            <person name="Aastroem A."/>
            <person name="Groenvik K.-O."/>
            <person name="Virtanen A."/>
        </authorList>
    </citation>
    <scope>NUCLEOTIDE SEQUENCE [MRNA] OF 9-660 (ISOFORM 1)</scope>
</reference>
<reference key="4">
    <citation type="journal article" date="2004" name="J. Biol. Chem.">
        <title>Distinct sequence motifs within the 68-kDa subunit of cleavage factor Im mediate RNA binding, protein-protein interactions, and subcellular localization.</title>
        <authorList>
            <person name="Dettwiler S."/>
            <person name="Aringhieri C."/>
            <person name="Cardinale S."/>
            <person name="Keller W."/>
            <person name="Barabino S.M."/>
        </authorList>
    </citation>
    <scope>INTERACTION WITH NUDT21/CPSF5</scope>
</reference>
<reference key="5">
    <citation type="journal article" date="2004" name="EMBO J.">
        <title>Human Fip1 is a subunit of CPSF that binds to U-rich RNA elements and stimulates poly(A) polymerase.</title>
        <authorList>
            <person name="Kaufmann I."/>
            <person name="Martin G."/>
            <person name="Friedlein A."/>
            <person name="Langen H."/>
            <person name="Keller W."/>
        </authorList>
    </citation>
    <scope>IDENTIFICATION IN A COMPLEX WITH CPSF1 AND FIP1L1</scope>
    <scope>INTERACTION WITH FIP1L1</scope>
</reference>
<reference key="6">
    <citation type="journal article" date="2008" name="Proc. Natl. Acad. Sci. U.S.A.">
        <title>A quantitative atlas of mitotic phosphorylation.</title>
        <authorList>
            <person name="Dephoure N."/>
            <person name="Zhou C."/>
            <person name="Villen J."/>
            <person name="Beausoleil S.A."/>
            <person name="Bakalarski C.E."/>
            <person name="Elledge S.J."/>
            <person name="Gygi S.P."/>
        </authorList>
    </citation>
    <scope>PHOSPHORYLATION [LARGE SCALE ANALYSIS] AT SER-24</scope>
    <scope>IDENTIFICATION BY MASS SPECTROMETRY [LARGE SCALE ANALYSIS]</scope>
    <source>
        <tissue>Cervix carcinoma</tissue>
    </source>
</reference>
<reference key="7">
    <citation type="journal article" date="2009" name="J. Biol. Chem.">
        <title>Inositol 1,4,5-triphosphate receptor-binding protein released with inositol 1,4,5-triphosphate (IRBIT) associates with components of the mRNA 3' processing machinery in a phosphorylation-dependent manner and inhibits polyadenylation.</title>
        <authorList>
            <person name="Kiefer H."/>
            <person name="Mizutani A."/>
            <person name="Iemura S."/>
            <person name="Natsume T."/>
            <person name="Ando H."/>
            <person name="Kuroda Y."/>
            <person name="Mikoshiba K."/>
        </authorList>
    </citation>
    <scope>INTERACTION WITH AHCYL1 AND FIP1L1</scope>
    <scope>FUNCTION</scope>
</reference>
<reference key="8">
    <citation type="journal article" date="2009" name="Sci. Signal.">
        <title>Quantitative phosphoproteomic analysis of T cell receptor signaling reveals system-wide modulation of protein-protein interactions.</title>
        <authorList>
            <person name="Mayya V."/>
            <person name="Lundgren D.H."/>
            <person name="Hwang S.-I."/>
            <person name="Rezaul K."/>
            <person name="Wu L."/>
            <person name="Eng J.K."/>
            <person name="Rodionov V."/>
            <person name="Han D.K."/>
        </authorList>
    </citation>
    <scope>PHOSPHORYLATION [LARGE SCALE ANALYSIS] AT SER-24</scope>
    <scope>IDENTIFICATION BY MASS SPECTROMETRY [LARGE SCALE ANALYSIS]</scope>
    <source>
        <tissue>Leukemic T-cell</tissue>
    </source>
</reference>
<reference key="9">
    <citation type="journal article" date="2010" name="Sci. Signal.">
        <title>Quantitative phosphoproteomics reveals widespread full phosphorylation site occupancy during mitosis.</title>
        <authorList>
            <person name="Olsen J.V."/>
            <person name="Vermeulen M."/>
            <person name="Santamaria A."/>
            <person name="Kumar C."/>
            <person name="Miller M.L."/>
            <person name="Jensen L.J."/>
            <person name="Gnad F."/>
            <person name="Cox J."/>
            <person name="Jensen T.S."/>
            <person name="Nigg E.A."/>
            <person name="Brunak S."/>
            <person name="Mann M."/>
        </authorList>
    </citation>
    <scope>IDENTIFICATION BY MASS SPECTROMETRY [LARGE SCALE ANALYSIS]</scope>
    <source>
        <tissue>Cervix carcinoma</tissue>
    </source>
</reference>
<reference key="10">
    <citation type="journal article" date="2011" name="BMC Syst. Biol.">
        <title>Initial characterization of the human central proteome.</title>
        <authorList>
            <person name="Burkard T.R."/>
            <person name="Planyavsky M."/>
            <person name="Kaupe I."/>
            <person name="Breitwieser F.P."/>
            <person name="Buerckstuemmer T."/>
            <person name="Bennett K.L."/>
            <person name="Superti-Furga G."/>
            <person name="Colinge J."/>
        </authorList>
    </citation>
    <scope>IDENTIFICATION BY MASS SPECTROMETRY [LARGE SCALE ANALYSIS]</scope>
</reference>
<reference key="11">
    <citation type="journal article" date="2012" name="Mol. Cell. Proteomics">
        <title>Comparative large-scale characterisation of plant vs. mammal proteins reveals similar and idiosyncratic N-alpha acetylation features.</title>
        <authorList>
            <person name="Bienvenut W.V."/>
            <person name="Sumpton D."/>
            <person name="Martinez A."/>
            <person name="Lilla S."/>
            <person name="Espagne C."/>
            <person name="Meinnel T."/>
            <person name="Giglione C."/>
        </authorList>
    </citation>
    <scope>CLEAVAGE OF INITIATOR METHIONINE [LARGE SCALE ANALYSIS]</scope>
    <scope>IDENTIFICATION BY MASS SPECTROMETRY [LARGE SCALE ANALYSIS]</scope>
</reference>
<reference key="12">
    <citation type="journal article" date="2013" name="J. Proteome Res.">
        <title>Toward a comprehensive characterization of a human cancer cell phosphoproteome.</title>
        <authorList>
            <person name="Zhou H."/>
            <person name="Di Palma S."/>
            <person name="Preisinger C."/>
            <person name="Peng M."/>
            <person name="Polat A.N."/>
            <person name="Heck A.J."/>
            <person name="Mohammed S."/>
        </authorList>
    </citation>
    <scope>PHOSPHORYLATION [LARGE SCALE ANALYSIS] AT SER-10; SER-24 AND SER-738</scope>
    <scope>IDENTIFICATION BY MASS SPECTROMETRY [LARGE SCALE ANALYSIS]</scope>
    <source>
        <tissue>Cervix carcinoma</tissue>
        <tissue>Erythroleukemia</tissue>
    </source>
</reference>
<reference key="13">
    <citation type="journal article" date="2014" name="J. Proteomics">
        <title>An enzyme assisted RP-RPLC approach for in-depth analysis of human liver phosphoproteome.</title>
        <authorList>
            <person name="Bian Y."/>
            <person name="Song C."/>
            <person name="Cheng K."/>
            <person name="Dong M."/>
            <person name="Wang F."/>
            <person name="Huang J."/>
            <person name="Sun D."/>
            <person name="Wang L."/>
            <person name="Ye M."/>
            <person name="Zou H."/>
        </authorList>
    </citation>
    <scope>PHOSPHORYLATION [LARGE SCALE ANALYSIS] AT SER-558</scope>
    <scope>IDENTIFICATION BY MASS SPECTROMETRY [LARGE SCALE ANALYSIS]</scope>
    <source>
        <tissue>Liver</tissue>
    </source>
</reference>
<organism>
    <name type="scientific">Homo sapiens</name>
    <name type="common">Human</name>
    <dbReference type="NCBI Taxonomy" id="9606"/>
    <lineage>
        <taxon>Eukaryota</taxon>
        <taxon>Metazoa</taxon>
        <taxon>Chordata</taxon>
        <taxon>Craniata</taxon>
        <taxon>Vertebrata</taxon>
        <taxon>Euteleostomi</taxon>
        <taxon>Mammalia</taxon>
        <taxon>Eutheria</taxon>
        <taxon>Euarchontoglires</taxon>
        <taxon>Primates</taxon>
        <taxon>Haplorrhini</taxon>
        <taxon>Catarrhini</taxon>
        <taxon>Hominidae</taxon>
        <taxon>Homo</taxon>
    </lineage>
</organism>
<sequence length="745" mass="82843">MPFPVTTQGSQQTQPPQKHYGITSPISLAAPKETDCVLTQKLIETLKPFGVFEEEEELQRRILILGKLNNLVKEWIREISESKNLPQSVIENVGGKIFTFGSYRLGVHTKGADIDALCVAPRHVDRSDFFTSFYDKLKLQEEVKDLRAVEEAFVPVIKLCFDGIEIDILFARLALQTIPEDLDLRDDSLLKNLDIRCIRSLNGCRVTDEILHLVPNIDNFRLTLRAIKLWAKRHNIYSNILGFLGGVSWAMLVARTCQLYPNAIASTLVHKFFLVFSKWEWPNPVLLKQPEECNLNLPVWDPRVNPSDRYHLMPIITPAYPQQNSTYNVSVSTRMVMVEEFKQGLAITDEILLSKAEWSKLFEAPNFFQKYKHYIVLLASAPTEKQRLEWVGLVESKIRILVGSLEKNEFITLAHVNPQSFPAPKENPDKEEFRTMWVIGLVFKKTENSENLSVDLTYDIQSFTDTVYRQAINSKMFEVDMKIAAMHVKRKQLHQLLPNHVLQKKKKHSTEGVKLTALNDSSLDLSMDSDNSMSVPSPTSATKTSPLNSSGSSQGRNSPAPAVTAASVTNIQATEVSVPQVNSSESSGGTSSESIPQTATQPAISPPPKPTVSRVVSSTRLVNPPPRSSGNAATSGNAATKIPTPIVGVKRTSSPHKEESPKKTKTEEDETSEDANCLALSGHDKTEAKEQLDTETSTTQSETIQTAASLLASQKTSSTDLSDIPALPANPIPVIKNSIKLRLNR</sequence>
<proteinExistence type="evidence at protein level"/>
<name>PAPOA_HUMAN</name>
<accession>P51003</accession>
<accession>Q86SX4</accession>
<accession>Q86TV0</accession>
<accession>Q8IYF5</accession>
<accession>Q9BVU2</accession>
<keyword id="KW-0002">3D-structure</keyword>
<keyword id="KW-0007">Acetylation</keyword>
<keyword id="KW-0025">Alternative splicing</keyword>
<keyword id="KW-0067">ATP-binding</keyword>
<keyword id="KW-0963">Cytoplasm</keyword>
<keyword id="KW-1017">Isopeptide bond</keyword>
<keyword id="KW-0460">Magnesium</keyword>
<keyword id="KW-0464">Manganese</keyword>
<keyword id="KW-0479">Metal-binding</keyword>
<keyword id="KW-0507">mRNA processing</keyword>
<keyword id="KW-0547">Nucleotide-binding</keyword>
<keyword id="KW-0539">Nucleus</keyword>
<keyword id="KW-0597">Phosphoprotein</keyword>
<keyword id="KW-1267">Proteomics identification</keyword>
<keyword id="KW-1185">Reference proteome</keyword>
<keyword id="KW-0694">RNA-binding</keyword>
<keyword id="KW-0808">Transferase</keyword>
<keyword id="KW-0832">Ubl conjugation</keyword>
<evidence type="ECO:0000250" key="1"/>
<evidence type="ECO:0000250" key="2">
    <source>
        <dbReference type="UniProtKB" id="P25500"/>
    </source>
</evidence>
<evidence type="ECO:0000250" key="3">
    <source>
        <dbReference type="UniProtKB" id="Q61183"/>
    </source>
</evidence>
<evidence type="ECO:0000256" key="4">
    <source>
        <dbReference type="SAM" id="MobiDB-lite"/>
    </source>
</evidence>
<evidence type="ECO:0000269" key="5">
    <source>
    </source>
</evidence>
<evidence type="ECO:0000303" key="6">
    <source>
    </source>
</evidence>
<evidence type="ECO:0000303" key="7">
    <source ref="2"/>
</evidence>
<evidence type="ECO:0000305" key="8"/>
<evidence type="ECO:0007744" key="9">
    <source>
    </source>
</evidence>
<evidence type="ECO:0007744" key="10">
    <source>
    </source>
</evidence>
<evidence type="ECO:0007744" key="11">
    <source>
    </source>
</evidence>
<evidence type="ECO:0007744" key="12">
    <source>
    </source>
</evidence>
<evidence type="ECO:0007744" key="13">
    <source>
    </source>
</evidence>
<gene>
    <name type="primary">PAPOLA</name>
    <name type="synonym">PAP</name>
</gene>
<protein>
    <recommendedName>
        <fullName>Poly(A) polymerase alpha</fullName>
        <shortName>PAP-alpha</shortName>
        <ecNumber>2.7.7.19</ecNumber>
    </recommendedName>
    <alternativeName>
        <fullName>Polynucleotide adenylyltransferase alpha</fullName>
    </alternativeName>
</protein>